<reference key="1">
    <citation type="journal article" date="2000" name="Nature">
        <title>Sequence and analysis of chromosome 3 of the plant Arabidopsis thaliana.</title>
        <authorList>
            <person name="Salanoubat M."/>
            <person name="Lemcke K."/>
            <person name="Rieger M."/>
            <person name="Ansorge W."/>
            <person name="Unseld M."/>
            <person name="Fartmann B."/>
            <person name="Valle G."/>
            <person name="Bloecker H."/>
            <person name="Perez-Alonso M."/>
            <person name="Obermaier B."/>
            <person name="Delseny M."/>
            <person name="Boutry M."/>
            <person name="Grivell L.A."/>
            <person name="Mache R."/>
            <person name="Puigdomenech P."/>
            <person name="De Simone V."/>
            <person name="Choisne N."/>
            <person name="Artiguenave F."/>
            <person name="Robert C."/>
            <person name="Brottier P."/>
            <person name="Wincker P."/>
            <person name="Cattolico L."/>
            <person name="Weissenbach J."/>
            <person name="Saurin W."/>
            <person name="Quetier F."/>
            <person name="Schaefer M."/>
            <person name="Mueller-Auer S."/>
            <person name="Gabel C."/>
            <person name="Fuchs M."/>
            <person name="Benes V."/>
            <person name="Wurmbach E."/>
            <person name="Drzonek H."/>
            <person name="Erfle H."/>
            <person name="Jordan N."/>
            <person name="Bangert S."/>
            <person name="Wiedelmann R."/>
            <person name="Kranz H."/>
            <person name="Voss H."/>
            <person name="Holland R."/>
            <person name="Brandt P."/>
            <person name="Nyakatura G."/>
            <person name="Vezzi A."/>
            <person name="D'Angelo M."/>
            <person name="Pallavicini A."/>
            <person name="Toppo S."/>
            <person name="Simionati B."/>
            <person name="Conrad A."/>
            <person name="Hornischer K."/>
            <person name="Kauer G."/>
            <person name="Loehnert T.-H."/>
            <person name="Nordsiek G."/>
            <person name="Reichelt J."/>
            <person name="Scharfe M."/>
            <person name="Schoen O."/>
            <person name="Bargues M."/>
            <person name="Terol J."/>
            <person name="Climent J."/>
            <person name="Navarro P."/>
            <person name="Collado C."/>
            <person name="Perez-Perez A."/>
            <person name="Ottenwaelder B."/>
            <person name="Duchemin D."/>
            <person name="Cooke R."/>
            <person name="Laudie M."/>
            <person name="Berger-Llauro C."/>
            <person name="Purnelle B."/>
            <person name="Masuy D."/>
            <person name="de Haan M."/>
            <person name="Maarse A.C."/>
            <person name="Alcaraz J.-P."/>
            <person name="Cottet A."/>
            <person name="Casacuberta E."/>
            <person name="Monfort A."/>
            <person name="Argiriou A."/>
            <person name="Flores M."/>
            <person name="Liguori R."/>
            <person name="Vitale D."/>
            <person name="Mannhaupt G."/>
            <person name="Haase D."/>
            <person name="Schoof H."/>
            <person name="Rudd S."/>
            <person name="Zaccaria P."/>
            <person name="Mewes H.-W."/>
            <person name="Mayer K.F.X."/>
            <person name="Kaul S."/>
            <person name="Town C.D."/>
            <person name="Koo H.L."/>
            <person name="Tallon L.J."/>
            <person name="Jenkins J."/>
            <person name="Rooney T."/>
            <person name="Rizzo M."/>
            <person name="Walts A."/>
            <person name="Utterback T."/>
            <person name="Fujii C.Y."/>
            <person name="Shea T.P."/>
            <person name="Creasy T.H."/>
            <person name="Haas B."/>
            <person name="Maiti R."/>
            <person name="Wu D."/>
            <person name="Peterson J."/>
            <person name="Van Aken S."/>
            <person name="Pai G."/>
            <person name="Militscher J."/>
            <person name="Sellers P."/>
            <person name="Gill J.E."/>
            <person name="Feldblyum T.V."/>
            <person name="Preuss D."/>
            <person name="Lin X."/>
            <person name="Nierman W.C."/>
            <person name="Salzberg S.L."/>
            <person name="White O."/>
            <person name="Venter J.C."/>
            <person name="Fraser C.M."/>
            <person name="Kaneko T."/>
            <person name="Nakamura Y."/>
            <person name="Sato S."/>
            <person name="Kato T."/>
            <person name="Asamizu E."/>
            <person name="Sasamoto S."/>
            <person name="Kimura T."/>
            <person name="Idesawa K."/>
            <person name="Kawashima K."/>
            <person name="Kishida Y."/>
            <person name="Kiyokawa C."/>
            <person name="Kohara M."/>
            <person name="Matsumoto M."/>
            <person name="Matsuno A."/>
            <person name="Muraki A."/>
            <person name="Nakayama S."/>
            <person name="Nakazaki N."/>
            <person name="Shinpo S."/>
            <person name="Takeuchi C."/>
            <person name="Wada T."/>
            <person name="Watanabe A."/>
            <person name="Yamada M."/>
            <person name="Yasuda M."/>
            <person name="Tabata S."/>
        </authorList>
    </citation>
    <scope>NUCLEOTIDE SEQUENCE [LARGE SCALE GENOMIC DNA]</scope>
    <source>
        <strain>cv. Columbia</strain>
    </source>
</reference>
<reference key="2">
    <citation type="journal article" date="2000" name="DNA Res.">
        <title>Structural analysis of Arabidopsis thaliana chromosome 3. II. Sequence features of the 4,251,695 bp regions covered by 90 P1, TAC and BAC clones.</title>
        <authorList>
            <person name="Kaneko T."/>
            <person name="Katoh T."/>
            <person name="Sato S."/>
            <person name="Nakamura Y."/>
            <person name="Asamizu E."/>
            <person name="Tabata S."/>
        </authorList>
    </citation>
    <scope>NUCLEOTIDE SEQUENCE [LARGE SCALE GENOMIC DNA]</scope>
    <source>
        <strain>cv. Columbia</strain>
    </source>
</reference>
<reference key="3">
    <citation type="journal article" date="2017" name="Plant J.">
        <title>Araport11: a complete reannotation of the Arabidopsis thaliana reference genome.</title>
        <authorList>
            <person name="Cheng C.Y."/>
            <person name="Krishnakumar V."/>
            <person name="Chan A.P."/>
            <person name="Thibaud-Nissen F."/>
            <person name="Schobel S."/>
            <person name="Town C.D."/>
        </authorList>
    </citation>
    <scope>GENOME REANNOTATION</scope>
    <source>
        <strain>cv. Columbia</strain>
    </source>
</reference>
<reference key="4">
    <citation type="journal article" date="2003" name="Science">
        <title>Empirical analysis of transcriptional activity in the Arabidopsis genome.</title>
        <authorList>
            <person name="Yamada K."/>
            <person name="Lim J."/>
            <person name="Dale J.M."/>
            <person name="Chen H."/>
            <person name="Shinn P."/>
            <person name="Palm C.J."/>
            <person name="Southwick A.M."/>
            <person name="Wu H.C."/>
            <person name="Kim C.J."/>
            <person name="Nguyen M."/>
            <person name="Pham P.K."/>
            <person name="Cheuk R.F."/>
            <person name="Karlin-Newmann G."/>
            <person name="Liu S.X."/>
            <person name="Lam B."/>
            <person name="Sakano H."/>
            <person name="Wu T."/>
            <person name="Yu G."/>
            <person name="Miranda M."/>
            <person name="Quach H.L."/>
            <person name="Tripp M."/>
            <person name="Chang C.H."/>
            <person name="Lee J.M."/>
            <person name="Toriumi M.J."/>
            <person name="Chan M.M."/>
            <person name="Tang C.C."/>
            <person name="Onodera C.S."/>
            <person name="Deng J.M."/>
            <person name="Akiyama K."/>
            <person name="Ansari Y."/>
            <person name="Arakawa T."/>
            <person name="Banh J."/>
            <person name="Banno F."/>
            <person name="Bowser L."/>
            <person name="Brooks S.Y."/>
            <person name="Carninci P."/>
            <person name="Chao Q."/>
            <person name="Choy N."/>
            <person name="Enju A."/>
            <person name="Goldsmith A.D."/>
            <person name="Gurjal M."/>
            <person name="Hansen N.F."/>
            <person name="Hayashizaki Y."/>
            <person name="Johnson-Hopson C."/>
            <person name="Hsuan V.W."/>
            <person name="Iida K."/>
            <person name="Karnes M."/>
            <person name="Khan S."/>
            <person name="Koesema E."/>
            <person name="Ishida J."/>
            <person name="Jiang P.X."/>
            <person name="Jones T."/>
            <person name="Kawai J."/>
            <person name="Kamiya A."/>
            <person name="Meyers C."/>
            <person name="Nakajima M."/>
            <person name="Narusaka M."/>
            <person name="Seki M."/>
            <person name="Sakurai T."/>
            <person name="Satou M."/>
            <person name="Tamse R."/>
            <person name="Vaysberg M."/>
            <person name="Wallender E.K."/>
            <person name="Wong C."/>
            <person name="Yamamura Y."/>
            <person name="Yuan S."/>
            <person name="Shinozaki K."/>
            <person name="Davis R.W."/>
            <person name="Theologis A."/>
            <person name="Ecker J.R."/>
        </authorList>
    </citation>
    <scope>NUCLEOTIDE SEQUENCE [LARGE SCALE MRNA]</scope>
    <source>
        <strain>cv. Columbia</strain>
    </source>
</reference>
<reference key="5">
    <citation type="submission" date="2006-07" db="EMBL/GenBank/DDBJ databases">
        <title>Large-scale analysis of RIKEN Arabidopsis full-length (RAFL) cDNAs.</title>
        <authorList>
            <person name="Totoki Y."/>
            <person name="Seki M."/>
            <person name="Ishida J."/>
            <person name="Nakajima M."/>
            <person name="Enju A."/>
            <person name="Kamiya A."/>
            <person name="Narusaka M."/>
            <person name="Shin-i T."/>
            <person name="Nakagawa M."/>
            <person name="Sakamoto N."/>
            <person name="Oishi K."/>
            <person name="Kohara Y."/>
            <person name="Kobayashi M."/>
            <person name="Toyoda A."/>
            <person name="Sakaki Y."/>
            <person name="Sakurai T."/>
            <person name="Iida K."/>
            <person name="Akiyama K."/>
            <person name="Satou M."/>
            <person name="Toyoda T."/>
            <person name="Konagaya A."/>
            <person name="Carninci P."/>
            <person name="Kawai J."/>
            <person name="Hayashizaki Y."/>
            <person name="Shinozaki K."/>
        </authorList>
    </citation>
    <scope>NUCLEOTIDE SEQUENCE [LARGE SCALE MRNA] OF 1-545</scope>
    <source>
        <strain>cv. Columbia</strain>
    </source>
</reference>
<reference key="6">
    <citation type="journal article" date="2000" name="Plant Physiol.">
        <title>The ubiquitin-specific protease family from Arabidopsis. AtUBP1 and 2 are required for the resistance to the amino acid analog canavanine.</title>
        <authorList>
            <person name="Yan N."/>
            <person name="Doelling J.H."/>
            <person name="Falbel T.G."/>
            <person name="Durski A.M."/>
            <person name="Vierstra R.D."/>
        </authorList>
    </citation>
    <scope>GENE FAMILY ORGANIZATION</scope>
    <scope>NOMENCLATURE</scope>
</reference>
<reference key="7">
    <citation type="journal article" date="2016" name="Proc. Natl. Acad. Sci. U.S.A.">
        <title>ROTUNDA3 function in plant development by phosphatase 2A-mediated regulation of auxin transporter recycling.</title>
        <authorList>
            <person name="Karampelias M."/>
            <person name="Neyt P."/>
            <person name="De Groeve S."/>
            <person name="Aesaert S."/>
            <person name="Coussens G."/>
            <person name="Rolcik J."/>
            <person name="Bruno L."/>
            <person name="De Winne N."/>
            <person name="Van Minnebruggen A."/>
            <person name="Van Montagu M."/>
            <person name="Ponce M.R."/>
            <person name="Micol J.L."/>
            <person name="Friml J."/>
            <person name="De Jaeger G."/>
            <person name="Van Lijsebettens M."/>
        </authorList>
    </citation>
    <scope>INTERACTION WITH SIC/RON3</scope>
    <source>
        <strain>cv. Columbia</strain>
        <strain>cv. Landsberg erecta</strain>
    </source>
</reference>
<reference key="8">
    <citation type="journal article" date="2018" name="Proc. Natl. Acad. Sci. U.S.A.">
        <title>Regulation of the stability of RGF1 receptor by the ubiquitin-specific proteases UBP12/UBP13 is critical for root meristem maintenance.</title>
        <authorList>
            <person name="An Z."/>
            <person name="Liu Y."/>
            <person name="Ou Y."/>
            <person name="Li J."/>
            <person name="Zhang B."/>
            <person name="Sun D."/>
            <person name="Sun Y."/>
            <person name="Tang W."/>
        </authorList>
    </citation>
    <scope>FUNCTION</scope>
    <scope>DISRUPTION PHENOTYPE</scope>
    <scope>INTERACTION WITH RGI1 AND RGI2</scope>
    <source>
        <strain>cv. Columbia</strain>
    </source>
</reference>
<organism>
    <name type="scientific">Arabidopsis thaliana</name>
    <name type="common">Mouse-ear cress</name>
    <dbReference type="NCBI Taxonomy" id="3702"/>
    <lineage>
        <taxon>Eukaryota</taxon>
        <taxon>Viridiplantae</taxon>
        <taxon>Streptophyta</taxon>
        <taxon>Embryophyta</taxon>
        <taxon>Tracheophyta</taxon>
        <taxon>Spermatophyta</taxon>
        <taxon>Magnoliopsida</taxon>
        <taxon>eudicotyledons</taxon>
        <taxon>Gunneridae</taxon>
        <taxon>Pentapetalae</taxon>
        <taxon>rosids</taxon>
        <taxon>malvids</taxon>
        <taxon>Brassicales</taxon>
        <taxon>Brassicaceae</taxon>
        <taxon>Camelineae</taxon>
        <taxon>Arabidopsis</taxon>
    </lineage>
</organism>
<gene>
    <name evidence="9" type="primary">UBP13</name>
    <name evidence="11" type="ordered locus">At3g11910</name>
    <name evidence="12" type="ORF">F26K24.20</name>
    <name evidence="13" type="ORF">MEC18.1</name>
</gene>
<proteinExistence type="evidence at protein level"/>
<comment type="function">
    <text evidence="1 8">Recognizes and hydrolyzes the peptide bond at the C-terminal Gly of ubiquitin. Involved in the processing of poly-ubiquitin precursors as well as that of ubiquitinated proteins (By similarity). Positive regulator of root meristem development that, together with UBP12, prevents the ubiquitination and turnover of RGFR1 induced by the RGF1 hormone peptide, thus influencing PLT1 and PLT2 expression (PubMed:29339500).</text>
</comment>
<comment type="catalytic activity">
    <reaction evidence="4 5">
        <text>Thiol-dependent hydrolysis of ester, thioester, amide, peptide and isopeptide bonds formed by the C-terminal Gly of ubiquitin (a 76-residue protein attached to proteins as an intracellular targeting signal).</text>
        <dbReference type="EC" id="3.4.19.12"/>
    </reaction>
</comment>
<comment type="subunit">
    <text evidence="7 8">Interacts with SIC/RON3 (PubMed:26888284). Interacts with RGI1 and RGI2 (PubMed:29339500).</text>
</comment>
<comment type="alternative products">
    <event type="alternative splicing"/>
    <isoform>
        <id>Q84WU2-1</id>
        <name>1</name>
        <sequence type="displayed"/>
    </isoform>
    <text>A number of isoforms are produced. According to EST sequences.</text>
</comment>
<comment type="disruption phenotype">
    <text evidence="8">The double mutant ubp12 ubp13 roots are completely insensitive to exogenous applied hormone peptide RGF1 associated with an accelerated RGF1-induced ubiquitination and turnover of RGFR1 and are characterized by a reduced number of cortical meristem cells and disturbed PLT1 and PLT2 expression.</text>
</comment>
<comment type="similarity">
    <text evidence="10">Belongs to the peptidase C19 family.</text>
</comment>
<comment type="sequence caution" evidence="10">
    <conflict type="erroneous gene model prediction">
        <sequence resource="EMBL-CDS" id="AAF23207"/>
    </conflict>
</comment>
<comment type="sequence caution" evidence="10">
    <conflict type="erroneous gene model prediction">
        <sequence resource="EMBL-CDS" id="BAB17021"/>
    </conflict>
</comment>
<keyword id="KW-0025">Alternative splicing</keyword>
<keyword id="KW-0378">Hydrolase</keyword>
<keyword id="KW-0645">Protease</keyword>
<keyword id="KW-1185">Reference proteome</keyword>
<keyword id="KW-0788">Thiol protease</keyword>
<keyword id="KW-0833">Ubl conjugation pathway</keyword>
<accession>Q84WU2</accession>
<accession>Q0WVD3</accession>
<accession>Q9FU99</accession>
<accession>Q9SF08</accession>
<evidence type="ECO:0000250" key="1">
    <source>
        <dbReference type="UniProtKB" id="Q9FPT5"/>
    </source>
</evidence>
<evidence type="ECO:0000255" key="2">
    <source>
        <dbReference type="PROSITE-ProRule" id="PRU00129"/>
    </source>
</evidence>
<evidence type="ECO:0000255" key="3">
    <source>
        <dbReference type="PROSITE-ProRule" id="PRU01035"/>
    </source>
</evidence>
<evidence type="ECO:0000255" key="4">
    <source>
        <dbReference type="PROSITE-ProRule" id="PRU10092"/>
    </source>
</evidence>
<evidence type="ECO:0000255" key="5">
    <source>
        <dbReference type="PROSITE-ProRule" id="PRU10093"/>
    </source>
</evidence>
<evidence type="ECO:0000256" key="6">
    <source>
        <dbReference type="SAM" id="MobiDB-lite"/>
    </source>
</evidence>
<evidence type="ECO:0000269" key="7">
    <source>
    </source>
</evidence>
<evidence type="ECO:0000269" key="8">
    <source>
    </source>
</evidence>
<evidence type="ECO:0000303" key="9">
    <source>
    </source>
</evidence>
<evidence type="ECO:0000305" key="10"/>
<evidence type="ECO:0000312" key="11">
    <source>
        <dbReference type="Araport" id="AT3G11910"/>
    </source>
</evidence>
<evidence type="ECO:0000312" key="12">
    <source>
        <dbReference type="EMBL" id="AAF23207.1"/>
    </source>
</evidence>
<evidence type="ECO:0000312" key="13">
    <source>
        <dbReference type="EMBL" id="BAB17021.1"/>
    </source>
</evidence>
<dbReference type="EC" id="3.4.19.12" evidence="4 5"/>
<dbReference type="EMBL" id="AC016795">
    <property type="protein sequence ID" value="AAF23207.1"/>
    <property type="status" value="ALT_SEQ"/>
    <property type="molecule type" value="Genomic_DNA"/>
</dbReference>
<dbReference type="EMBL" id="AP002040">
    <property type="protein sequence ID" value="BAB17021.1"/>
    <property type="status" value="ALT_SEQ"/>
    <property type="molecule type" value="Genomic_DNA"/>
</dbReference>
<dbReference type="EMBL" id="CP002686">
    <property type="protein sequence ID" value="AEE75116.1"/>
    <property type="molecule type" value="Genomic_DNA"/>
</dbReference>
<dbReference type="EMBL" id="CP002686">
    <property type="protein sequence ID" value="ANM64251.1"/>
    <property type="molecule type" value="Genomic_DNA"/>
</dbReference>
<dbReference type="EMBL" id="BT002760">
    <property type="protein sequence ID" value="AAO22588.1"/>
    <property type="molecule type" value="mRNA"/>
</dbReference>
<dbReference type="EMBL" id="AK226819">
    <property type="protein sequence ID" value="BAE98915.1"/>
    <property type="molecule type" value="mRNA"/>
</dbReference>
<dbReference type="RefSeq" id="NP_001326292.1">
    <molecule id="Q84WU2-1"/>
    <property type="nucleotide sequence ID" value="NM_001337962.1"/>
</dbReference>
<dbReference type="RefSeq" id="NP_187797.3">
    <molecule id="Q84WU2-1"/>
    <property type="nucleotide sequence ID" value="NM_112024.6"/>
</dbReference>
<dbReference type="SMR" id="Q84WU2"/>
<dbReference type="BioGRID" id="5698">
    <property type="interactions" value="4"/>
</dbReference>
<dbReference type="FunCoup" id="Q84WU2">
    <property type="interactions" value="5422"/>
</dbReference>
<dbReference type="STRING" id="3702.Q84WU2"/>
<dbReference type="MEROPS" id="C19.A53"/>
<dbReference type="PaxDb" id="3702-AT3G11910.1"/>
<dbReference type="ProteomicsDB" id="233060">
    <molecule id="Q84WU2-1"/>
</dbReference>
<dbReference type="EnsemblPlants" id="AT3G11910.1">
    <molecule id="Q84WU2-1"/>
    <property type="protein sequence ID" value="AT3G11910.1"/>
    <property type="gene ID" value="AT3G11910"/>
</dbReference>
<dbReference type="EnsemblPlants" id="AT3G11910.3">
    <molecule id="Q84WU2-1"/>
    <property type="protein sequence ID" value="AT3G11910.3"/>
    <property type="gene ID" value="AT3G11910"/>
</dbReference>
<dbReference type="GeneID" id="820364"/>
<dbReference type="Gramene" id="AT3G11910.1">
    <molecule id="Q84WU2-1"/>
    <property type="protein sequence ID" value="AT3G11910.1"/>
    <property type="gene ID" value="AT3G11910"/>
</dbReference>
<dbReference type="Gramene" id="AT3G11910.3">
    <molecule id="Q84WU2-1"/>
    <property type="protein sequence ID" value="AT3G11910.3"/>
    <property type="gene ID" value="AT3G11910"/>
</dbReference>
<dbReference type="KEGG" id="ath:AT3G11910"/>
<dbReference type="Araport" id="AT3G11910"/>
<dbReference type="TAIR" id="AT3G11910">
    <property type="gene designation" value="UBP13"/>
</dbReference>
<dbReference type="eggNOG" id="KOG1863">
    <property type="taxonomic scope" value="Eukaryota"/>
</dbReference>
<dbReference type="HOGENOM" id="CLU_003532_0_1_1"/>
<dbReference type="InParanoid" id="Q84WU2"/>
<dbReference type="OrthoDB" id="289038at2759"/>
<dbReference type="PhylomeDB" id="Q84WU2"/>
<dbReference type="PRO" id="PR:Q84WU2"/>
<dbReference type="Proteomes" id="UP000006548">
    <property type="component" value="Chromosome 3"/>
</dbReference>
<dbReference type="ExpressionAtlas" id="Q84WU2">
    <property type="expression patterns" value="baseline and differential"/>
</dbReference>
<dbReference type="GO" id="GO:0005737">
    <property type="term" value="C:cytoplasm"/>
    <property type="evidence" value="ECO:0000353"/>
    <property type="project" value="TAIR"/>
</dbReference>
<dbReference type="GO" id="GO:0005829">
    <property type="term" value="C:cytosol"/>
    <property type="evidence" value="ECO:0007005"/>
    <property type="project" value="TAIR"/>
</dbReference>
<dbReference type="GO" id="GO:0005634">
    <property type="term" value="C:nucleus"/>
    <property type="evidence" value="ECO:0000353"/>
    <property type="project" value="TAIR"/>
</dbReference>
<dbReference type="GO" id="GO:0009506">
    <property type="term" value="C:plasmodesma"/>
    <property type="evidence" value="ECO:0007005"/>
    <property type="project" value="TAIR"/>
</dbReference>
<dbReference type="GO" id="GO:0004843">
    <property type="term" value="F:cysteine-type deubiquitinase activity"/>
    <property type="evidence" value="ECO:0000314"/>
    <property type="project" value="TAIR"/>
</dbReference>
<dbReference type="GO" id="GO:0009867">
    <property type="term" value="P:jasmonic acid mediated signaling pathway"/>
    <property type="evidence" value="ECO:0000315"/>
    <property type="project" value="TAIR"/>
</dbReference>
<dbReference type="GO" id="GO:0010078">
    <property type="term" value="P:maintenance of root meristem identity"/>
    <property type="evidence" value="ECO:0000315"/>
    <property type="project" value="UniProtKB"/>
</dbReference>
<dbReference type="GO" id="GO:0016579">
    <property type="term" value="P:protein deubiquitination"/>
    <property type="evidence" value="ECO:0000314"/>
    <property type="project" value="TAIR"/>
</dbReference>
<dbReference type="GO" id="GO:0070646">
    <property type="term" value="P:protein modification by small protein removal"/>
    <property type="evidence" value="ECO:0000315"/>
    <property type="project" value="UniProtKB"/>
</dbReference>
<dbReference type="GO" id="GO:0006508">
    <property type="term" value="P:proteolysis"/>
    <property type="evidence" value="ECO:0007669"/>
    <property type="project" value="UniProtKB-KW"/>
</dbReference>
<dbReference type="GO" id="GO:0031647">
    <property type="term" value="P:regulation of protein stability"/>
    <property type="evidence" value="ECO:0000315"/>
    <property type="project" value="UniProtKB"/>
</dbReference>
<dbReference type="GO" id="GO:2000280">
    <property type="term" value="P:regulation of root development"/>
    <property type="evidence" value="ECO:0000315"/>
    <property type="project" value="UniProtKB"/>
</dbReference>
<dbReference type="CDD" id="cd00121">
    <property type="entry name" value="MATH"/>
    <property type="match status" value="1"/>
</dbReference>
<dbReference type="CDD" id="cd02659">
    <property type="entry name" value="peptidase_C19C"/>
    <property type="match status" value="1"/>
</dbReference>
<dbReference type="FunFam" id="2.60.210.10:FF:000005">
    <property type="entry name" value="Ubiquitin carboxyl-terminal hydrolase 13"/>
    <property type="match status" value="1"/>
</dbReference>
<dbReference type="FunFam" id="3.10.20.90:FF:000034">
    <property type="entry name" value="Ubiquitin carboxyl-terminal hydrolase 13"/>
    <property type="match status" value="1"/>
</dbReference>
<dbReference type="FunFam" id="3.10.20.90:FF:000050">
    <property type="entry name" value="Ubiquitin carboxyl-terminal hydrolase 13"/>
    <property type="match status" value="1"/>
</dbReference>
<dbReference type="FunFam" id="3.90.70.10:FF:000002">
    <property type="entry name" value="Ubiquitin carboxyl-terminal hydrolase 13"/>
    <property type="match status" value="1"/>
</dbReference>
<dbReference type="Gene3D" id="2.60.210.10">
    <property type="entry name" value="Apoptosis, Tumor Necrosis Factor Receptor Associated Protein 2, Chain A"/>
    <property type="match status" value="1"/>
</dbReference>
<dbReference type="Gene3D" id="3.90.70.10">
    <property type="entry name" value="Cysteine proteinases"/>
    <property type="match status" value="1"/>
</dbReference>
<dbReference type="Gene3D" id="3.10.20.90">
    <property type="entry name" value="Phosphatidylinositol 3-kinase Catalytic Subunit, Chain A, domain 1"/>
    <property type="match status" value="2"/>
</dbReference>
<dbReference type="InterPro" id="IPR002083">
    <property type="entry name" value="MATH/TRAF_dom"/>
</dbReference>
<dbReference type="InterPro" id="IPR038765">
    <property type="entry name" value="Papain-like_cys_pep_sf"/>
</dbReference>
<dbReference type="InterPro" id="IPR050164">
    <property type="entry name" value="Peptidase_C19"/>
</dbReference>
<dbReference type="InterPro" id="IPR001394">
    <property type="entry name" value="Peptidase_C19_UCH"/>
</dbReference>
<dbReference type="InterPro" id="IPR008974">
    <property type="entry name" value="TRAF-like"/>
</dbReference>
<dbReference type="InterPro" id="IPR024729">
    <property type="entry name" value="USP7_ICP0-binding_dom"/>
</dbReference>
<dbReference type="InterPro" id="IPR029346">
    <property type="entry name" value="USP_C"/>
</dbReference>
<dbReference type="InterPro" id="IPR018200">
    <property type="entry name" value="USP_CS"/>
</dbReference>
<dbReference type="InterPro" id="IPR028889">
    <property type="entry name" value="USP_dom"/>
</dbReference>
<dbReference type="PANTHER" id="PTHR24006">
    <property type="entry name" value="UBIQUITIN CARBOXYL-TERMINAL HYDROLASE"/>
    <property type="match status" value="1"/>
</dbReference>
<dbReference type="PANTHER" id="PTHR24006:SF644">
    <property type="entry name" value="UBIQUITIN CARBOXYL-TERMINAL HYDROLASE 7"/>
    <property type="match status" value="1"/>
</dbReference>
<dbReference type="Pfam" id="PF22486">
    <property type="entry name" value="MATH_2"/>
    <property type="match status" value="1"/>
</dbReference>
<dbReference type="Pfam" id="PF00443">
    <property type="entry name" value="UCH"/>
    <property type="match status" value="1"/>
</dbReference>
<dbReference type="Pfam" id="PF14533">
    <property type="entry name" value="USP7_C2"/>
    <property type="match status" value="1"/>
</dbReference>
<dbReference type="Pfam" id="PF12436">
    <property type="entry name" value="USP7_ICP0_bdg"/>
    <property type="match status" value="1"/>
</dbReference>
<dbReference type="SMART" id="SM00061">
    <property type="entry name" value="MATH"/>
    <property type="match status" value="1"/>
</dbReference>
<dbReference type="SUPFAM" id="SSF54001">
    <property type="entry name" value="Cysteine proteinases"/>
    <property type="match status" value="1"/>
</dbReference>
<dbReference type="SUPFAM" id="SSF49599">
    <property type="entry name" value="TRAF domain-like"/>
    <property type="match status" value="1"/>
</dbReference>
<dbReference type="PROSITE" id="PS50144">
    <property type="entry name" value="MATH"/>
    <property type="match status" value="1"/>
</dbReference>
<dbReference type="PROSITE" id="PS00972">
    <property type="entry name" value="USP_1"/>
    <property type="match status" value="1"/>
</dbReference>
<dbReference type="PROSITE" id="PS00973">
    <property type="entry name" value="USP_2"/>
    <property type="match status" value="1"/>
</dbReference>
<dbReference type="PROSITE" id="PS50235">
    <property type="entry name" value="USP_3"/>
    <property type="match status" value="1"/>
</dbReference>
<sequence length="1115" mass="130649">MTMMTPPPLDQQEDEEMLVPNPDLVEGPQPMEVAQTDPAATAVENPPPEDPPSLKFTWTIPMFTRLNTRKHYSDVFVVGGYKWRILIFPKGNNVDHLSMYLDVADAANLPYGWSRYSQFSLAVVNQVNNRYSIRKETQHQFNARESDWGFTSFMPLSELYEPTRGYLVNDTVLIEAEVAVRKVLDYWSYDSKKETGFVGLKNQGATCYMNSLLQTLYHIPYFRKAVYHMPTTENDAPTASIPLALQSLFYKLQYNDTSVATKELTKSFGWDTYDSFMQHDVQELNRVLCEKLEDKMKGTVVEGTIQKLFEGHHMNYIECINVDYKSTRKESFYDLQLDVKGCKDVYASFDKYVEVERLEGDNKYHAEGHDLQDAKKGVLFIDFPPVLQLQLKRFEYDFMRDTMVKINDRYEFPLQLDLDREDGRYLSPDADKSVRNLYTLHSVLVHSGGVHGGHYYAFIRPTLSDQWYKFDDERVTKEDVKRALEEQYGGEEELPQNNPGFNNPPFKFTKYSNAYMLVYIRESDKDKIICNVDEKDIAEHLRVRLKKEQEEKEDKRKYKAQAHLFTTIKVARDDDITEQIGKNIYFDLVDHEKVRSFRIQKQTPFQQFKEEVAKEFGVPVQLQRFWIWAKRQNHTYRPNRPLSPNEELQTVGQIREASNKANNAELKLFLEIERGPDDLPIPPPEKTSEDILLFFKLYDPENAVLRYVGRLMVKSSSKPMDIVGQLNKMAGFAPDEEIELFEEIKFEPCVMCEQIDKKTSFRLCQIEDGDIICYQKPLSIEESEFRYPDVPSFLEYVQNRELVRFRTLEKPKEDEFTMELSKLHTYDDVVERVAEKLGLDDPSKLRLTSHNCYSQQPKPQPIKYRGVDHLSDMLVHYNQTSDILYYEVLDIPLPELQGLKTLKVAFHSATKDEVIIHNIRLPKQSTVGDVINELKTKVELSHQDAELRLLEVFFHKIYKIFPSTERIENINDQYWTLRAEEIPEEEKNIGPNDRLIHVYHFTKEAGQNQQVQNFGEPFFLVIHEGETLEEIKTRIQKKLHVPDEDFAKWKFASFSMGRPDYLLDTDVVYNRFQRRDVYGAWEQYLGLEHIDNAPKRAYAANQNRHAYEKPVKIYN</sequence>
<name>UBP13_ARATH</name>
<protein>
    <recommendedName>
        <fullName evidence="9">Ubiquitin C-terminal hydrolase 13</fullName>
        <ecNumber evidence="4 5">3.4.19.12</ecNumber>
    </recommendedName>
    <alternativeName>
        <fullName evidence="9">Deubiquitinating enzyme 13</fullName>
        <shortName evidence="9">AtUBP13</shortName>
    </alternativeName>
    <alternativeName>
        <fullName evidence="9">Ubiquitin thioesterase 13</fullName>
    </alternativeName>
    <alternativeName>
        <fullName evidence="9">Ubiquitin-specific-processing protease 13</fullName>
    </alternativeName>
</protein>
<feature type="chain" id="PRO_0000313040" description="Ubiquitin C-terminal hydrolase 13">
    <location>
        <begin position="1"/>
        <end position="1115"/>
    </location>
</feature>
<feature type="domain" description="MATH" evidence="2">
    <location>
        <begin position="53"/>
        <end position="178"/>
    </location>
</feature>
<feature type="domain" description="USP" evidence="3">
    <location>
        <begin position="198"/>
        <end position="522"/>
    </location>
</feature>
<feature type="region of interest" description="Disordered" evidence="6">
    <location>
        <begin position="1"/>
        <end position="51"/>
    </location>
</feature>
<feature type="active site" description="Nucleophile" evidence="3 4 5">
    <location>
        <position position="207"/>
    </location>
</feature>
<feature type="active site" description="Proton acceptor" evidence="3 4 5">
    <location>
        <position position="454"/>
    </location>
</feature>